<accession>Q8T685</accession>
<accession>Q555D6</accession>
<protein>
    <recommendedName>
        <fullName>ABC transporter G family member 12</fullName>
    </recommendedName>
    <alternativeName>
        <fullName>ABC transporter ABCG.12</fullName>
    </alternativeName>
</protein>
<keyword id="KW-0067">ATP-binding</keyword>
<keyword id="KW-0472">Membrane</keyword>
<keyword id="KW-0547">Nucleotide-binding</keyword>
<keyword id="KW-1185">Reference proteome</keyword>
<keyword id="KW-0812">Transmembrane</keyword>
<keyword id="KW-1133">Transmembrane helix</keyword>
<keyword id="KW-0813">Transport</keyword>
<organism>
    <name type="scientific">Dictyostelium discoideum</name>
    <name type="common">Social amoeba</name>
    <dbReference type="NCBI Taxonomy" id="44689"/>
    <lineage>
        <taxon>Eukaryota</taxon>
        <taxon>Amoebozoa</taxon>
        <taxon>Evosea</taxon>
        <taxon>Eumycetozoa</taxon>
        <taxon>Dictyostelia</taxon>
        <taxon>Dictyosteliales</taxon>
        <taxon>Dictyosteliaceae</taxon>
        <taxon>Dictyostelium</taxon>
    </lineage>
</organism>
<feature type="chain" id="PRO_0000391399" description="ABC transporter G family member 12">
    <location>
        <begin position="1"/>
        <end position="638"/>
    </location>
</feature>
<feature type="transmembrane region" description="Helical" evidence="1">
    <location>
        <begin position="376"/>
        <end position="396"/>
    </location>
</feature>
<feature type="transmembrane region" description="Helical" evidence="1">
    <location>
        <begin position="410"/>
        <end position="430"/>
    </location>
</feature>
<feature type="transmembrane region" description="Helical" evidence="1">
    <location>
        <begin position="459"/>
        <end position="479"/>
    </location>
</feature>
<feature type="transmembrane region" description="Helical" evidence="1">
    <location>
        <begin position="484"/>
        <end position="504"/>
    </location>
</feature>
<feature type="transmembrane region" description="Helical" evidence="1">
    <location>
        <begin position="516"/>
        <end position="536"/>
    </location>
</feature>
<feature type="transmembrane region" description="Helical" evidence="1">
    <location>
        <begin position="544"/>
        <end position="564"/>
    </location>
</feature>
<feature type="transmembrane region" description="Helical" evidence="1">
    <location>
        <begin position="612"/>
        <end position="632"/>
    </location>
</feature>
<feature type="domain" description="ABC transporter" evidence="2">
    <location>
        <begin position="58"/>
        <end position="301"/>
    </location>
</feature>
<feature type="domain" description="ABC transmembrane type-2">
    <location>
        <begin position="374"/>
        <end position="633"/>
    </location>
</feature>
<feature type="region of interest" description="Disordered" evidence="3">
    <location>
        <begin position="42"/>
        <end position="61"/>
    </location>
</feature>
<feature type="binding site" evidence="2">
    <location>
        <begin position="91"/>
        <end position="98"/>
    </location>
    <ligand>
        <name>ATP</name>
        <dbReference type="ChEBI" id="CHEBI:30616"/>
    </ligand>
</feature>
<proteinExistence type="inferred from homology"/>
<comment type="subcellular location">
    <subcellularLocation>
        <location evidence="4">Membrane</location>
        <topology evidence="4">Multi-pass membrane protein</topology>
    </subcellularLocation>
</comment>
<comment type="similarity">
    <text evidence="4">Belongs to the ABC transporter superfamily. ABCG family. Eye pigment precursor importer (TC 3.A.1.204) subfamily.</text>
</comment>
<evidence type="ECO:0000255" key="1"/>
<evidence type="ECO:0000255" key="2">
    <source>
        <dbReference type="PROSITE-ProRule" id="PRU00434"/>
    </source>
</evidence>
<evidence type="ECO:0000256" key="3">
    <source>
        <dbReference type="SAM" id="MobiDB-lite"/>
    </source>
</evidence>
<evidence type="ECO:0000305" key="4"/>
<gene>
    <name type="primary">abcG12</name>
    <name type="ORF">DDB_G0274115</name>
</gene>
<dbReference type="EMBL" id="AF482387">
    <property type="protein sequence ID" value="AAL91494.1"/>
    <property type="molecule type" value="Genomic_DNA"/>
</dbReference>
<dbReference type="EMBL" id="AAFI02000012">
    <property type="protein sequence ID" value="EAL69950.1"/>
    <property type="molecule type" value="Genomic_DNA"/>
</dbReference>
<dbReference type="RefSeq" id="XP_644137.1">
    <property type="nucleotide sequence ID" value="XM_639045.1"/>
</dbReference>
<dbReference type="SMR" id="Q8T685"/>
<dbReference type="FunCoup" id="Q8T685">
    <property type="interactions" value="5"/>
</dbReference>
<dbReference type="STRING" id="44689.Q8T685"/>
<dbReference type="PaxDb" id="44689-DDB0191233"/>
<dbReference type="EnsemblProtists" id="EAL69950">
    <property type="protein sequence ID" value="EAL69950"/>
    <property type="gene ID" value="DDB_G0274115"/>
</dbReference>
<dbReference type="GeneID" id="8619567"/>
<dbReference type="KEGG" id="ddi:DDB_G0274115"/>
<dbReference type="dictyBase" id="DDB_G0274115">
    <property type="gene designation" value="abcG12"/>
</dbReference>
<dbReference type="VEuPathDB" id="AmoebaDB:DDB_G0274115"/>
<dbReference type="eggNOG" id="KOG0061">
    <property type="taxonomic scope" value="Eukaryota"/>
</dbReference>
<dbReference type="HOGENOM" id="CLU_000604_57_8_1"/>
<dbReference type="InParanoid" id="Q8T685"/>
<dbReference type="OMA" id="YANPWWA"/>
<dbReference type="PhylomeDB" id="Q8T685"/>
<dbReference type="Reactome" id="R-DDI-1369062">
    <property type="pathway name" value="ABC transporters in lipid homeostasis"/>
</dbReference>
<dbReference type="Reactome" id="R-DDI-1660661">
    <property type="pathway name" value="Sphingolipid de novo biosynthesis"/>
</dbReference>
<dbReference type="Reactome" id="R-DDI-189451">
    <property type="pathway name" value="Heme biosynthesis"/>
</dbReference>
<dbReference type="Reactome" id="R-DDI-189483">
    <property type="pathway name" value="Heme degradation"/>
</dbReference>
<dbReference type="Reactome" id="R-DDI-917937">
    <property type="pathway name" value="Iron uptake and transport"/>
</dbReference>
<dbReference type="Reactome" id="R-DDI-9753281">
    <property type="pathway name" value="Paracetamol ADME"/>
</dbReference>
<dbReference type="Reactome" id="R-DDI-9793528">
    <property type="pathway name" value="Ciprofloxacin ADME"/>
</dbReference>
<dbReference type="PRO" id="PR:Q8T685"/>
<dbReference type="Proteomes" id="UP000002195">
    <property type="component" value="Chromosome 2"/>
</dbReference>
<dbReference type="GO" id="GO:0043190">
    <property type="term" value="C:ATP-binding cassette (ABC) transporter complex"/>
    <property type="evidence" value="ECO:0000317"/>
    <property type="project" value="dictyBase"/>
</dbReference>
<dbReference type="GO" id="GO:0016020">
    <property type="term" value="C:membrane"/>
    <property type="evidence" value="ECO:0000318"/>
    <property type="project" value="GO_Central"/>
</dbReference>
<dbReference type="GO" id="GO:0140359">
    <property type="term" value="F:ABC-type transporter activity"/>
    <property type="evidence" value="ECO:0007669"/>
    <property type="project" value="InterPro"/>
</dbReference>
<dbReference type="GO" id="GO:0005524">
    <property type="term" value="F:ATP binding"/>
    <property type="evidence" value="ECO:0007669"/>
    <property type="project" value="UniProtKB-KW"/>
</dbReference>
<dbReference type="GO" id="GO:0016887">
    <property type="term" value="F:ATP hydrolysis activity"/>
    <property type="evidence" value="ECO:0007669"/>
    <property type="project" value="InterPro"/>
</dbReference>
<dbReference type="GO" id="GO:0042626">
    <property type="term" value="F:ATPase-coupled transmembrane transporter activity"/>
    <property type="evidence" value="ECO:0000318"/>
    <property type="project" value="GO_Central"/>
</dbReference>
<dbReference type="GO" id="GO:0030587">
    <property type="term" value="P:sorocarp development"/>
    <property type="evidence" value="ECO:0007669"/>
    <property type="project" value="UniProtKB-ARBA"/>
</dbReference>
<dbReference type="GO" id="GO:0055085">
    <property type="term" value="P:transmembrane transport"/>
    <property type="evidence" value="ECO:0000318"/>
    <property type="project" value="GO_Central"/>
</dbReference>
<dbReference type="CDD" id="cd03213">
    <property type="entry name" value="ABCG_EPDR"/>
    <property type="match status" value="1"/>
</dbReference>
<dbReference type="FunFam" id="3.40.50.300:FF:002300">
    <property type="entry name" value="ABC transporter G family protein"/>
    <property type="match status" value="1"/>
</dbReference>
<dbReference type="Gene3D" id="3.40.50.300">
    <property type="entry name" value="P-loop containing nucleotide triphosphate hydrolases"/>
    <property type="match status" value="1"/>
</dbReference>
<dbReference type="InterPro" id="IPR003593">
    <property type="entry name" value="AAA+_ATPase"/>
</dbReference>
<dbReference type="InterPro" id="IPR013525">
    <property type="entry name" value="ABC2_TM"/>
</dbReference>
<dbReference type="InterPro" id="IPR003439">
    <property type="entry name" value="ABC_transporter-like_ATP-bd"/>
</dbReference>
<dbReference type="InterPro" id="IPR017871">
    <property type="entry name" value="ABC_transporter-like_CS"/>
</dbReference>
<dbReference type="InterPro" id="IPR043926">
    <property type="entry name" value="ABCG_dom"/>
</dbReference>
<dbReference type="InterPro" id="IPR050352">
    <property type="entry name" value="ABCG_transporters"/>
</dbReference>
<dbReference type="InterPro" id="IPR027417">
    <property type="entry name" value="P-loop_NTPase"/>
</dbReference>
<dbReference type="PANTHER" id="PTHR48041:SF87">
    <property type="entry name" value="ABC TRANSPORTER G FAMILY MEMBER 12-RELATED"/>
    <property type="match status" value="1"/>
</dbReference>
<dbReference type="PANTHER" id="PTHR48041">
    <property type="entry name" value="ABC TRANSPORTER G FAMILY MEMBER 28"/>
    <property type="match status" value="1"/>
</dbReference>
<dbReference type="Pfam" id="PF01061">
    <property type="entry name" value="ABC2_membrane"/>
    <property type="match status" value="1"/>
</dbReference>
<dbReference type="Pfam" id="PF19055">
    <property type="entry name" value="ABC2_membrane_7"/>
    <property type="match status" value="1"/>
</dbReference>
<dbReference type="Pfam" id="PF00005">
    <property type="entry name" value="ABC_tran"/>
    <property type="match status" value="1"/>
</dbReference>
<dbReference type="SMART" id="SM00382">
    <property type="entry name" value="AAA"/>
    <property type="match status" value="1"/>
</dbReference>
<dbReference type="SUPFAM" id="SSF52540">
    <property type="entry name" value="P-loop containing nucleoside triphosphate hydrolases"/>
    <property type="match status" value="1"/>
</dbReference>
<dbReference type="PROSITE" id="PS00211">
    <property type="entry name" value="ABC_TRANSPORTER_1"/>
    <property type="match status" value="1"/>
</dbReference>
<dbReference type="PROSITE" id="PS50893">
    <property type="entry name" value="ABC_TRANSPORTER_2"/>
    <property type="match status" value="1"/>
</dbReference>
<sequence>MELQTIPNNISLANGDSKGVQLTFKNIVYKVDNKKYKKLVKKQEKAKKKNDTESSTGDMNTGVSTTIEKELTILNNVSGVIEKGELVALMGPSGSGKSTLLDILAQRKSTGKITGQLLVNGKEIGEAYKKYCSYVTQEDVLLQTSTVFETLKFYADLKLPGVSEIEKIKRVEQIIEDIGLTKRTHSKIGGVLPGGILMKGLSGGEKRRVSIGCGLVTNPSLIFLDEPTSGLDSVAALQIMKTLLNLTLKGVTVICSIHQPRPEIFALFNKVMVIIKGKMIYSGSNILEYFESLGYPCPNNTNPADFCLDSAVEIGEGERYTEICNQWQKIWENELLNEIEYPPVNVEKPKTASWGYQYWILLGRTWKDFLRNQGNFVARVGTAVVTGLLFGVCFAGLKETEADVQKILGTIFFLITGLNLTPFAVISLFLSGRTLFNAERASKIYHSFPYYMAMVTVETLIVFLVALINAAICYLFAHLRWTAGHFFFAIMVYFFVHLLSDFMISTIANLTGTSDMTFAYGSGLSVIYMLFAGFYVPTNELPKSFGWLHWVNPLFYSFVSLVVNQFEDLPLECTRPNIPVGNSTIQIPCQFSNGNQVIEYYGIDDWTRGSSFGVVVAWTVFFFWTSYLALHFLNKEKR</sequence>
<reference key="1">
    <citation type="journal article" date="2002" name="Eukaryot. Cell">
        <title>Evolutionary analyses of ABC transporters of Dictyostelium discoideum.</title>
        <authorList>
            <person name="Anjard C."/>
            <person name="Loomis W.F."/>
        </authorList>
    </citation>
    <scope>NUCLEOTIDE SEQUENCE [GENOMIC DNA]</scope>
    <scope>NOMENCLATURE</scope>
    <source>
        <strain>AX4</strain>
    </source>
</reference>
<reference key="2">
    <citation type="journal article" date="2002" name="Nature">
        <title>Sequence and analysis of chromosome 2 of Dictyostelium discoideum.</title>
        <authorList>
            <person name="Gloeckner G."/>
            <person name="Eichinger L."/>
            <person name="Szafranski K."/>
            <person name="Pachebat J.A."/>
            <person name="Bankier A.T."/>
            <person name="Dear P.H."/>
            <person name="Lehmann R."/>
            <person name="Baumgart C."/>
            <person name="Parra G."/>
            <person name="Abril J.F."/>
            <person name="Guigo R."/>
            <person name="Kumpf K."/>
            <person name="Tunggal B."/>
            <person name="Cox E.C."/>
            <person name="Quail M.A."/>
            <person name="Platzer M."/>
            <person name="Rosenthal A."/>
            <person name="Noegel A.A."/>
        </authorList>
    </citation>
    <scope>NUCLEOTIDE SEQUENCE [LARGE SCALE GENOMIC DNA]</scope>
    <source>
        <strain>AX4</strain>
    </source>
</reference>
<reference key="3">
    <citation type="journal article" date="2005" name="Nature">
        <title>The genome of the social amoeba Dictyostelium discoideum.</title>
        <authorList>
            <person name="Eichinger L."/>
            <person name="Pachebat J.A."/>
            <person name="Gloeckner G."/>
            <person name="Rajandream M.A."/>
            <person name="Sucgang R."/>
            <person name="Berriman M."/>
            <person name="Song J."/>
            <person name="Olsen R."/>
            <person name="Szafranski K."/>
            <person name="Xu Q."/>
            <person name="Tunggal B."/>
            <person name="Kummerfeld S."/>
            <person name="Madera M."/>
            <person name="Konfortov B.A."/>
            <person name="Rivero F."/>
            <person name="Bankier A.T."/>
            <person name="Lehmann R."/>
            <person name="Hamlin N."/>
            <person name="Davies R."/>
            <person name="Gaudet P."/>
            <person name="Fey P."/>
            <person name="Pilcher K."/>
            <person name="Chen G."/>
            <person name="Saunders D."/>
            <person name="Sodergren E.J."/>
            <person name="Davis P."/>
            <person name="Kerhornou A."/>
            <person name="Nie X."/>
            <person name="Hall N."/>
            <person name="Anjard C."/>
            <person name="Hemphill L."/>
            <person name="Bason N."/>
            <person name="Farbrother P."/>
            <person name="Desany B."/>
            <person name="Just E."/>
            <person name="Morio T."/>
            <person name="Rost R."/>
            <person name="Churcher C.M."/>
            <person name="Cooper J."/>
            <person name="Haydock S."/>
            <person name="van Driessche N."/>
            <person name="Cronin A."/>
            <person name="Goodhead I."/>
            <person name="Muzny D.M."/>
            <person name="Mourier T."/>
            <person name="Pain A."/>
            <person name="Lu M."/>
            <person name="Harper D."/>
            <person name="Lindsay R."/>
            <person name="Hauser H."/>
            <person name="James K.D."/>
            <person name="Quiles M."/>
            <person name="Madan Babu M."/>
            <person name="Saito T."/>
            <person name="Buchrieser C."/>
            <person name="Wardroper A."/>
            <person name="Felder M."/>
            <person name="Thangavelu M."/>
            <person name="Johnson D."/>
            <person name="Knights A."/>
            <person name="Loulseged H."/>
            <person name="Mungall K.L."/>
            <person name="Oliver K."/>
            <person name="Price C."/>
            <person name="Quail M.A."/>
            <person name="Urushihara H."/>
            <person name="Hernandez J."/>
            <person name="Rabbinowitsch E."/>
            <person name="Steffen D."/>
            <person name="Sanders M."/>
            <person name="Ma J."/>
            <person name="Kohara Y."/>
            <person name="Sharp S."/>
            <person name="Simmonds M.N."/>
            <person name="Spiegler S."/>
            <person name="Tivey A."/>
            <person name="Sugano S."/>
            <person name="White B."/>
            <person name="Walker D."/>
            <person name="Woodward J.R."/>
            <person name="Winckler T."/>
            <person name="Tanaka Y."/>
            <person name="Shaulsky G."/>
            <person name="Schleicher M."/>
            <person name="Weinstock G.M."/>
            <person name="Rosenthal A."/>
            <person name="Cox E.C."/>
            <person name="Chisholm R.L."/>
            <person name="Gibbs R.A."/>
            <person name="Loomis W.F."/>
            <person name="Platzer M."/>
            <person name="Kay R.R."/>
            <person name="Williams J.G."/>
            <person name="Dear P.H."/>
            <person name="Noegel A.A."/>
            <person name="Barrell B.G."/>
            <person name="Kuspa A."/>
        </authorList>
    </citation>
    <scope>NUCLEOTIDE SEQUENCE [LARGE SCALE GENOMIC DNA]</scope>
    <source>
        <strain>AX4</strain>
    </source>
</reference>
<name>ABCGC_DICDI</name>